<accession>J4UJ50</accession>
<dbReference type="EMBL" id="JH725173">
    <property type="protein sequence ID" value="EJP63742.1"/>
    <property type="molecule type" value="Genomic_DNA"/>
</dbReference>
<dbReference type="RefSeq" id="XP_008600705.1">
    <property type="nucleotide sequence ID" value="XM_008602483.1"/>
</dbReference>
<dbReference type="GeneID" id="19890398"/>
<dbReference type="HOGENOM" id="CLU_2468712_0_0_1"/>
<dbReference type="InParanoid" id="J4UJ50"/>
<dbReference type="Proteomes" id="UP000002762">
    <property type="component" value="Unassembled WGS sequence"/>
</dbReference>
<proteinExistence type="evidence at transcript level"/>
<gene>
    <name evidence="4" type="primary">hyd1F</name>
    <name type="ORF">BBA_07386</name>
</gene>
<organism>
    <name type="scientific">Beauveria bassiana (strain ARSEF 2860)</name>
    <name type="common">White muscardine disease fungus</name>
    <name type="synonym">Tritirachium shiotae</name>
    <dbReference type="NCBI Taxonomy" id="655819"/>
    <lineage>
        <taxon>Eukaryota</taxon>
        <taxon>Fungi</taxon>
        <taxon>Dikarya</taxon>
        <taxon>Ascomycota</taxon>
        <taxon>Pezizomycotina</taxon>
        <taxon>Sordariomycetes</taxon>
        <taxon>Hypocreomycetidae</taxon>
        <taxon>Hypocreales</taxon>
        <taxon>Cordycipitaceae</taxon>
        <taxon>Beauveria</taxon>
    </lineage>
</organism>
<evidence type="ECO:0000250" key="1">
    <source>
        <dbReference type="UniProtKB" id="Q04571"/>
    </source>
</evidence>
<evidence type="ECO:0000255" key="2"/>
<evidence type="ECO:0000269" key="3">
    <source>
    </source>
</evidence>
<evidence type="ECO:0000303" key="4">
    <source>
    </source>
</evidence>
<evidence type="ECO:0000305" key="5"/>
<evidence type="ECO:0000305" key="6">
    <source>
    </source>
</evidence>
<feature type="signal peptide" evidence="2">
    <location>
        <begin position="1"/>
        <end position="21"/>
    </location>
</feature>
<feature type="chain" id="PRO_5003780668" description="Class I hydrophobin F">
    <location>
        <begin position="22"/>
        <end position="88"/>
    </location>
</feature>
<feature type="disulfide bond" evidence="1">
    <location>
        <begin position="30"/>
        <end position="67"/>
    </location>
</feature>
<feature type="disulfide bond" evidence="1">
    <location>
        <begin position="34"/>
        <end position="58"/>
    </location>
</feature>
<feature type="disulfide bond" evidence="1">
    <location>
        <begin position="35"/>
        <end position="51"/>
    </location>
</feature>
<feature type="disulfide bond" evidence="1">
    <location>
        <begin position="68"/>
        <end position="84"/>
    </location>
</feature>
<sequence>MLSRLFTVPAILLATLGSAATLAPREESACQRVCCDALVQSTSRGLVGINCNRGGIDCGFSGQIASCCAAIVPVGARQGTGVQCQRGN</sequence>
<reference key="1">
    <citation type="journal article" date="2012" name="Sci. Rep.">
        <title>Genomic perspectives on the evolution of fungal entomopathogenicity in Beauveria bassiana.</title>
        <authorList>
            <person name="Xiao G."/>
            <person name="Ying S.-H."/>
            <person name="Zheng P."/>
            <person name="Wang Z.-L."/>
            <person name="Zhang S."/>
            <person name="Xie X.-Q."/>
            <person name="Shang Y."/>
            <person name="St Leger R.J."/>
            <person name="Zhao G.-P."/>
            <person name="Wang C."/>
            <person name="Feng M.-G."/>
        </authorList>
    </citation>
    <scope>NUCLEOTIDE SEQUENCE [LARGE SCALE GENOMIC DNA]</scope>
    <source>
        <strain>ARSEF 2860</strain>
    </source>
</reference>
<reference key="2">
    <citation type="journal article" date="2025" name="Microbiol. Res.">
        <title>Deciphering roles of nine hydrophobins (Hyd1A-F and Hyd2A-C) in the asexual and insect-pathogenic lifecycles of Beauveria bassiana.</title>
        <authorList>
            <person name="Feng J.R."/>
            <person name="Li M."/>
            <person name="Ying S.H."/>
            <person name="Feng M.G."/>
        </authorList>
    </citation>
    <scope>FUNCTION</scope>
    <scope>SUBCELLULAR LOCATION</scope>
    <scope>DISRUPTION PHENOTYPE</scope>
</reference>
<name>HYD1F_BEAB2</name>
<comment type="function">
    <text evidence="3 6">Aerial growth, conidiation, and dispersal of filamentous fungi in the environment rely upon a capability of their secreting small amphipathic proteins called hydrophobins (HPBs) with low sequence identity. Class I can self-assemble into an outermost layer of rodlet bundles on aerial cell surfaces, conferring cellular hydrophobicity that supports fungal growth, development and dispersal; whereas Class II form highly ordered films at water-air interfaces through intermolecular interactions but contribute nothing to the rodlet structure (Probable). Hyd1F contributes to certain cell wall-related features, such as hydrophobicity but is not involved in cell wall-related events during fungal proliferation in host hemocoel (PubMed:39724799). Does not contribute to conidial hydrophobicity (PubMed:39724799).</text>
</comment>
<comment type="subcellular location">
    <subcellularLocation>
        <location evidence="3">Secreted</location>
    </subcellularLocation>
    <subcellularLocation>
        <location evidence="3">Secreted</location>
        <location evidence="3">Cell wall</location>
    </subcellularLocation>
    <subcellularLocation>
        <location evidence="3">Vacuole</location>
    </subcellularLocation>
    <subcellularLocation>
        <location evidence="3">Cytoplasmic vesicle</location>
    </subcellularLocation>
    <text evidence="3">Accumulates exclusively on the cell walls of aerial hyphae and conidia and in the vacuoles and vesicles of hyphae and blastospores.</text>
</comment>
<comment type="induction">
    <text evidence="3">Under normal conditions on SDAY medium (Sabouraud dextrose agar plus 1% yeast extract), hyd1F is transcriptionally active during the first days and sharply down-regulated from day 3 onwards, leading to a 99.7 % reduction of its expression level on day 7. Hyd1A is the most active at transcription level under normal culture conditions, followed by hyd1B, hyd1E, hyd2A and hyd2C in order.</text>
</comment>
<comment type="disruption phenotype">
    <text evidence="3">Does not affect radial growth and multiple stress responses.</text>
</comment>
<comment type="similarity">
    <text evidence="5">Belongs to the fungal hydrophobin family.</text>
</comment>
<keyword id="KW-0134">Cell wall</keyword>
<keyword id="KW-0968">Cytoplasmic vesicle</keyword>
<keyword id="KW-1015">Disulfide bond</keyword>
<keyword id="KW-1185">Reference proteome</keyword>
<keyword id="KW-0964">Secreted</keyword>
<keyword id="KW-0732">Signal</keyword>
<keyword id="KW-0926">Vacuole</keyword>
<protein>
    <recommendedName>
        <fullName evidence="4">Class I hydrophobin F</fullName>
    </recommendedName>
</protein>